<name>MURG_FRATM</name>
<reference key="1">
    <citation type="journal article" date="2009" name="PLoS Pathog.">
        <title>Molecular evolutionary consequences of niche restriction in Francisella tularensis, a facultative intracellular pathogen.</title>
        <authorList>
            <person name="Larsson P."/>
            <person name="Elfsmark D."/>
            <person name="Svensson K."/>
            <person name="Wikstroem P."/>
            <person name="Forsman M."/>
            <person name="Brettin T."/>
            <person name="Keim P."/>
            <person name="Johansson A."/>
        </authorList>
    </citation>
    <scope>NUCLEOTIDE SEQUENCE [LARGE SCALE GENOMIC DNA]</scope>
    <source>
        <strain>FSC147</strain>
    </source>
</reference>
<organism>
    <name type="scientific">Francisella tularensis subsp. mediasiatica (strain FSC147)</name>
    <dbReference type="NCBI Taxonomy" id="441952"/>
    <lineage>
        <taxon>Bacteria</taxon>
        <taxon>Pseudomonadati</taxon>
        <taxon>Pseudomonadota</taxon>
        <taxon>Gammaproteobacteria</taxon>
        <taxon>Thiotrichales</taxon>
        <taxon>Francisellaceae</taxon>
        <taxon>Francisella</taxon>
    </lineage>
</organism>
<sequence>MSLENKNIIITAGGTGGHIYPALAIAELLRQNKANVTWVGTPNSMEASIVPEYFNIQFIKSSGVRRKGIIKKITFPLKLAYNTLKSRSLLKKLKADLVIGFGGYVSGPICLAAAQINIPVIIHEQNAKIGLTNRILAKFATTICLAFEIENLHKQFSSKQLAKTKIVGNPVRKDIVALNDKARIYTDSSTLKILVLGGSQGAKAINEIIPKLIQKSNEQGINIKVWHQTGKLSLEETKDAYKDISQNHIKDIAAFIDDMAIAYNWADLVICRAGALTVSECAIAGLPAIFIPLPSAVDDHQFFNVQNIVNNNAGFCLRQQQMTLENLLAIIKPLNQDRSKLEQMSKMAKKTLIKNSSEQILDCVKKILNNK</sequence>
<gene>
    <name evidence="1" type="primary">murG</name>
    <name type="ordered locus">FTM_1022</name>
</gene>
<protein>
    <recommendedName>
        <fullName evidence="1">UDP-N-acetylglucosamine--N-acetylmuramyl-(pentapeptide) pyrophosphoryl-undecaprenol N-acetylglucosamine transferase</fullName>
        <ecNumber evidence="1">2.4.1.227</ecNumber>
    </recommendedName>
    <alternativeName>
        <fullName evidence="1">Undecaprenyl-PP-MurNAc-pentapeptide-UDPGlcNAc GlcNAc transferase</fullName>
    </alternativeName>
</protein>
<keyword id="KW-0131">Cell cycle</keyword>
<keyword id="KW-0132">Cell division</keyword>
<keyword id="KW-0997">Cell inner membrane</keyword>
<keyword id="KW-1003">Cell membrane</keyword>
<keyword id="KW-0133">Cell shape</keyword>
<keyword id="KW-0961">Cell wall biogenesis/degradation</keyword>
<keyword id="KW-0328">Glycosyltransferase</keyword>
<keyword id="KW-0472">Membrane</keyword>
<keyword id="KW-0573">Peptidoglycan synthesis</keyword>
<keyword id="KW-0808">Transferase</keyword>
<proteinExistence type="inferred from homology"/>
<comment type="function">
    <text evidence="1">Cell wall formation. Catalyzes the transfer of a GlcNAc subunit on undecaprenyl-pyrophosphoryl-MurNAc-pentapeptide (lipid intermediate I) to form undecaprenyl-pyrophosphoryl-MurNAc-(pentapeptide)GlcNAc (lipid intermediate II).</text>
</comment>
<comment type="catalytic activity">
    <reaction evidence="1">
        <text>di-trans,octa-cis-undecaprenyl diphospho-N-acetyl-alpha-D-muramoyl-L-alanyl-D-glutamyl-meso-2,6-diaminopimeloyl-D-alanyl-D-alanine + UDP-N-acetyl-alpha-D-glucosamine = di-trans,octa-cis-undecaprenyl diphospho-[N-acetyl-alpha-D-glucosaminyl-(1-&gt;4)]-N-acetyl-alpha-D-muramoyl-L-alanyl-D-glutamyl-meso-2,6-diaminopimeloyl-D-alanyl-D-alanine + UDP + H(+)</text>
        <dbReference type="Rhea" id="RHEA:31227"/>
        <dbReference type="ChEBI" id="CHEBI:15378"/>
        <dbReference type="ChEBI" id="CHEBI:57705"/>
        <dbReference type="ChEBI" id="CHEBI:58223"/>
        <dbReference type="ChEBI" id="CHEBI:61387"/>
        <dbReference type="ChEBI" id="CHEBI:61388"/>
        <dbReference type="EC" id="2.4.1.227"/>
    </reaction>
</comment>
<comment type="pathway">
    <text evidence="1">Cell wall biogenesis; peptidoglycan biosynthesis.</text>
</comment>
<comment type="subcellular location">
    <subcellularLocation>
        <location evidence="1">Cell inner membrane</location>
        <topology evidence="1">Peripheral membrane protein</topology>
        <orientation evidence="1">Cytoplasmic side</orientation>
    </subcellularLocation>
</comment>
<comment type="similarity">
    <text evidence="1">Belongs to the glycosyltransferase 28 family. MurG subfamily.</text>
</comment>
<evidence type="ECO:0000255" key="1">
    <source>
        <dbReference type="HAMAP-Rule" id="MF_00033"/>
    </source>
</evidence>
<dbReference type="EC" id="2.4.1.227" evidence="1"/>
<dbReference type="EMBL" id="CP000915">
    <property type="protein sequence ID" value="ACD30936.1"/>
    <property type="molecule type" value="Genomic_DNA"/>
</dbReference>
<dbReference type="SMR" id="B2SGS8"/>
<dbReference type="CAZy" id="GT28">
    <property type="family name" value="Glycosyltransferase Family 28"/>
</dbReference>
<dbReference type="KEGG" id="ftm:FTM_1022"/>
<dbReference type="HOGENOM" id="CLU_037404_2_0_6"/>
<dbReference type="UniPathway" id="UPA00219"/>
<dbReference type="GO" id="GO:0005886">
    <property type="term" value="C:plasma membrane"/>
    <property type="evidence" value="ECO:0007669"/>
    <property type="project" value="UniProtKB-SubCell"/>
</dbReference>
<dbReference type="GO" id="GO:0051991">
    <property type="term" value="F:UDP-N-acetyl-D-glucosamine:N-acetylmuramoyl-L-alanyl-D-glutamyl-meso-2,6-diaminopimelyl-D-alanyl-D-alanine-diphosphoundecaprenol 4-beta-N-acetylglucosaminlytransferase activity"/>
    <property type="evidence" value="ECO:0007669"/>
    <property type="project" value="RHEA"/>
</dbReference>
<dbReference type="GO" id="GO:0050511">
    <property type="term" value="F:undecaprenyldiphospho-muramoylpentapeptide beta-N-acetylglucosaminyltransferase activity"/>
    <property type="evidence" value="ECO:0007669"/>
    <property type="project" value="UniProtKB-UniRule"/>
</dbReference>
<dbReference type="GO" id="GO:0005975">
    <property type="term" value="P:carbohydrate metabolic process"/>
    <property type="evidence" value="ECO:0007669"/>
    <property type="project" value="InterPro"/>
</dbReference>
<dbReference type="GO" id="GO:0051301">
    <property type="term" value="P:cell division"/>
    <property type="evidence" value="ECO:0007669"/>
    <property type="project" value="UniProtKB-KW"/>
</dbReference>
<dbReference type="GO" id="GO:0071555">
    <property type="term" value="P:cell wall organization"/>
    <property type="evidence" value="ECO:0007669"/>
    <property type="project" value="UniProtKB-KW"/>
</dbReference>
<dbReference type="GO" id="GO:0030259">
    <property type="term" value="P:lipid glycosylation"/>
    <property type="evidence" value="ECO:0007669"/>
    <property type="project" value="UniProtKB-UniRule"/>
</dbReference>
<dbReference type="GO" id="GO:0009252">
    <property type="term" value="P:peptidoglycan biosynthetic process"/>
    <property type="evidence" value="ECO:0007669"/>
    <property type="project" value="UniProtKB-UniRule"/>
</dbReference>
<dbReference type="GO" id="GO:0008360">
    <property type="term" value="P:regulation of cell shape"/>
    <property type="evidence" value="ECO:0007669"/>
    <property type="project" value="UniProtKB-KW"/>
</dbReference>
<dbReference type="CDD" id="cd03785">
    <property type="entry name" value="GT28_MurG"/>
    <property type="match status" value="1"/>
</dbReference>
<dbReference type="Gene3D" id="3.40.50.2000">
    <property type="entry name" value="Glycogen Phosphorylase B"/>
    <property type="match status" value="2"/>
</dbReference>
<dbReference type="HAMAP" id="MF_00033">
    <property type="entry name" value="MurG"/>
    <property type="match status" value="1"/>
</dbReference>
<dbReference type="InterPro" id="IPR006009">
    <property type="entry name" value="GlcNAc_MurG"/>
</dbReference>
<dbReference type="InterPro" id="IPR007235">
    <property type="entry name" value="Glyco_trans_28_C"/>
</dbReference>
<dbReference type="InterPro" id="IPR004276">
    <property type="entry name" value="GlycoTrans_28_N"/>
</dbReference>
<dbReference type="NCBIfam" id="TIGR01133">
    <property type="entry name" value="murG"/>
    <property type="match status" value="1"/>
</dbReference>
<dbReference type="PANTHER" id="PTHR21015:SF22">
    <property type="entry name" value="GLYCOSYLTRANSFERASE"/>
    <property type="match status" value="1"/>
</dbReference>
<dbReference type="PANTHER" id="PTHR21015">
    <property type="entry name" value="UDP-N-ACETYLGLUCOSAMINE--N-ACETYLMURAMYL-(PENTAPEPTIDE) PYROPHOSPHORYL-UNDECAPRENOL N-ACETYLGLUCOSAMINE TRANSFERASE 1"/>
    <property type="match status" value="1"/>
</dbReference>
<dbReference type="Pfam" id="PF04101">
    <property type="entry name" value="Glyco_tran_28_C"/>
    <property type="match status" value="1"/>
</dbReference>
<dbReference type="Pfam" id="PF03033">
    <property type="entry name" value="Glyco_transf_28"/>
    <property type="match status" value="1"/>
</dbReference>
<dbReference type="SUPFAM" id="SSF53756">
    <property type="entry name" value="UDP-Glycosyltransferase/glycogen phosphorylase"/>
    <property type="match status" value="1"/>
</dbReference>
<feature type="chain" id="PRO_1000090435" description="UDP-N-acetylglucosamine--N-acetylmuramyl-(pentapeptide) pyrophosphoryl-undecaprenol N-acetylglucosamine transferase">
    <location>
        <begin position="1"/>
        <end position="371"/>
    </location>
</feature>
<feature type="binding site" evidence="1">
    <location>
        <begin position="15"/>
        <end position="17"/>
    </location>
    <ligand>
        <name>UDP-N-acetyl-alpha-D-glucosamine</name>
        <dbReference type="ChEBI" id="CHEBI:57705"/>
    </ligand>
</feature>
<feature type="binding site" evidence="1">
    <location>
        <position position="126"/>
    </location>
    <ligand>
        <name>UDP-N-acetyl-alpha-D-glucosamine</name>
        <dbReference type="ChEBI" id="CHEBI:57705"/>
    </ligand>
</feature>
<feature type="binding site" evidence="1">
    <location>
        <position position="172"/>
    </location>
    <ligand>
        <name>UDP-N-acetyl-alpha-D-glucosamine</name>
        <dbReference type="ChEBI" id="CHEBI:57705"/>
    </ligand>
</feature>
<feature type="binding site" evidence="1">
    <location>
        <position position="199"/>
    </location>
    <ligand>
        <name>UDP-N-acetyl-alpha-D-glucosamine</name>
        <dbReference type="ChEBI" id="CHEBI:57705"/>
    </ligand>
</feature>
<feature type="binding site" evidence="1">
    <location>
        <position position="256"/>
    </location>
    <ligand>
        <name>UDP-N-acetyl-alpha-D-glucosamine</name>
        <dbReference type="ChEBI" id="CHEBI:57705"/>
    </ligand>
</feature>
<feature type="binding site" evidence="1">
    <location>
        <begin position="275"/>
        <end position="280"/>
    </location>
    <ligand>
        <name>UDP-N-acetyl-alpha-D-glucosamine</name>
        <dbReference type="ChEBI" id="CHEBI:57705"/>
    </ligand>
</feature>
<feature type="binding site" evidence="1">
    <location>
        <position position="301"/>
    </location>
    <ligand>
        <name>UDP-N-acetyl-alpha-D-glucosamine</name>
        <dbReference type="ChEBI" id="CHEBI:57705"/>
    </ligand>
</feature>
<accession>B2SGS8</accession>